<feature type="signal peptide" evidence="2">
    <location>
        <begin position="1"/>
        <end position="19"/>
    </location>
</feature>
<feature type="chain" id="PRO_0000411901" description="Pheromone-processing carboxypeptidase KEX1">
    <location>
        <begin position="20"/>
        <end position="599"/>
    </location>
</feature>
<feature type="topological domain" description="Lumenal" evidence="2">
    <location>
        <begin position="20"/>
        <end position="512"/>
    </location>
</feature>
<feature type="transmembrane region" description="Helical" evidence="2">
    <location>
        <begin position="513"/>
        <end position="533"/>
    </location>
</feature>
<feature type="topological domain" description="Cytoplasmic" evidence="2">
    <location>
        <begin position="534"/>
        <end position="599"/>
    </location>
</feature>
<feature type="active site" evidence="1">
    <location>
        <position position="179"/>
    </location>
</feature>
<feature type="active site" evidence="1">
    <location>
        <position position="381"/>
    </location>
</feature>
<feature type="active site" evidence="1">
    <location>
        <position position="445"/>
    </location>
</feature>
<feature type="glycosylation site" description="N-linked (GlcNAc...) asparagine" evidence="2">
    <location>
        <position position="406"/>
    </location>
</feature>
<feature type="glycosylation site" description="N-linked (GlcNAc...) asparagine" evidence="2">
    <location>
        <position position="442"/>
    </location>
</feature>
<sequence>MLVRKLTLIGAALARAALALQQEDFVVNGELLPGVREIDRAEVPEMHAGLMPLEEDEDGRALFFWRMGEQCGKRCSNELIVWLNGGPGCSSMDGALMETGAFRVAEDGKLYLNSGSWHTRGTMLFVDQPVGTGFSRPGRDGRLRTELSQLADDFLLFMERYYAVFPEDRRRTLVLAGESYAGQYLPYFADAVVRRNAERAPEERYKLQNVMIGNGWVDPDLQSLSYVPFVSSRGLFGPETRNFQDILRDQEACQNAINHGPAKGFSHPECEGILPKLLSSIPGPDRPVQQCINMYDIRLRDVFPSCGMNWPADLPNVHKFFGTPGVLEALHVDPQVAGPWVECKSAVSEALVNAHSRPSVHLIPGLIEAGVKFVFFNGDQDVICNNMGVEMLIAELRWRGHMGFSNATENFDWYHSDADAKTLVAAGVVKRDGPVTFISVFNASHMVPFDVPRISRGIIDIERSATILGVKGDSRMLITVDTEEDVTLSTNAERNQQIRHNQLKRLNGDTRKFTIAVFGLTISSIIGVIVYFSMRLHYGAKIRAILTNPKSGTSSADDFSMDDEYTGTVMGDFHHGTHKKGQYYAVPDTDISSSELHSV</sequence>
<protein>
    <recommendedName>
        <fullName>Pheromone-processing carboxypeptidase KEX1</fullName>
        <ecNumber>3.4.16.6</ecNumber>
    </recommendedName>
    <alternativeName>
        <fullName>Carboxypeptidase D</fullName>
    </alternativeName>
</protein>
<gene>
    <name type="primary">KEX1</name>
    <name type="ordered locus">AFR549W</name>
</gene>
<name>KEX1_EREGS</name>
<proteinExistence type="inferred from homology"/>
<organism>
    <name type="scientific">Eremothecium gossypii (strain ATCC 10895 / CBS 109.51 / FGSC 9923 / NRRL Y-1056)</name>
    <name type="common">Yeast</name>
    <name type="synonym">Ashbya gossypii</name>
    <dbReference type="NCBI Taxonomy" id="284811"/>
    <lineage>
        <taxon>Eukaryota</taxon>
        <taxon>Fungi</taxon>
        <taxon>Dikarya</taxon>
        <taxon>Ascomycota</taxon>
        <taxon>Saccharomycotina</taxon>
        <taxon>Saccharomycetes</taxon>
        <taxon>Saccharomycetales</taxon>
        <taxon>Saccharomycetaceae</taxon>
        <taxon>Eremothecium</taxon>
    </lineage>
</organism>
<comment type="function">
    <text evidence="1">Protease with a carboxypeptidase B-like function involved in the C-terminal processing of the lysine and arginine residues from protein precursors. Promotes cell fusion and is involved in the programmed cell death (By similarity).</text>
</comment>
<comment type="catalytic activity">
    <reaction>
        <text>Preferential release of a C-terminal arginine or lysine residue.</text>
        <dbReference type="EC" id="3.4.16.6"/>
    </reaction>
</comment>
<comment type="subcellular location">
    <subcellularLocation>
        <location evidence="1">Golgi apparatus</location>
        <location evidence="1">trans-Golgi network membrane</location>
        <topology evidence="1">Single-pass type I membrane protein</topology>
    </subcellularLocation>
</comment>
<comment type="similarity">
    <text evidence="3">Belongs to the peptidase S10 family.</text>
</comment>
<reference key="1">
    <citation type="journal article" date="2004" name="Science">
        <title>The Ashbya gossypii genome as a tool for mapping the ancient Saccharomyces cerevisiae genome.</title>
        <authorList>
            <person name="Dietrich F.S."/>
            <person name="Voegeli S."/>
            <person name="Brachat S."/>
            <person name="Lerch A."/>
            <person name="Gates K."/>
            <person name="Steiner S."/>
            <person name="Mohr C."/>
            <person name="Poehlmann R."/>
            <person name="Luedi P."/>
            <person name="Choi S."/>
            <person name="Wing R.A."/>
            <person name="Flavier A."/>
            <person name="Gaffney T.D."/>
            <person name="Philippsen P."/>
        </authorList>
    </citation>
    <scope>NUCLEOTIDE SEQUENCE [LARGE SCALE GENOMIC DNA]</scope>
    <source>
        <strain>ATCC 10895 / CBS 109.51 / FGSC 9923 / NRRL Y-1056</strain>
    </source>
</reference>
<reference key="2">
    <citation type="journal article" date="2013" name="G3 (Bethesda)">
        <title>Genomes of Ashbya fungi isolated from insects reveal four mating-type loci, numerous translocations, lack of transposons, and distinct gene duplications.</title>
        <authorList>
            <person name="Dietrich F.S."/>
            <person name="Voegeli S."/>
            <person name="Kuo S."/>
            <person name="Philippsen P."/>
        </authorList>
    </citation>
    <scope>GENOME REANNOTATION</scope>
    <source>
        <strain>ATCC 10895 / CBS 109.51 / FGSC 9923 / NRRL Y-1056</strain>
    </source>
</reference>
<evidence type="ECO:0000250" key="1"/>
<evidence type="ECO:0000255" key="2"/>
<evidence type="ECO:0000305" key="3"/>
<dbReference type="EC" id="3.4.16.6"/>
<dbReference type="EMBL" id="AE016819">
    <property type="protein sequence ID" value="AAS53920.1"/>
    <property type="molecule type" value="Genomic_DNA"/>
</dbReference>
<dbReference type="RefSeq" id="NP_986096.1">
    <property type="nucleotide sequence ID" value="NM_212232.1"/>
</dbReference>
<dbReference type="SMR" id="Q752M5"/>
<dbReference type="FunCoup" id="Q752M5">
    <property type="interactions" value="124"/>
</dbReference>
<dbReference type="STRING" id="284811.Q752M5"/>
<dbReference type="ESTHER" id="ashgo-q752m5">
    <property type="family name" value="Carboxypeptidase_S10"/>
</dbReference>
<dbReference type="MEROPS" id="S10.007"/>
<dbReference type="GlyCosmos" id="Q752M5">
    <property type="glycosylation" value="2 sites, No reported glycans"/>
</dbReference>
<dbReference type="EnsemblFungi" id="AAS53920">
    <property type="protein sequence ID" value="AAS53920"/>
    <property type="gene ID" value="AGOS_AFR549W"/>
</dbReference>
<dbReference type="GeneID" id="4622376"/>
<dbReference type="KEGG" id="ago:AGOS_AFR549W"/>
<dbReference type="eggNOG" id="KOG1282">
    <property type="taxonomic scope" value="Eukaryota"/>
</dbReference>
<dbReference type="HOGENOM" id="CLU_008523_11_2_1"/>
<dbReference type="InParanoid" id="Q752M5"/>
<dbReference type="OMA" id="EMADQFV"/>
<dbReference type="OrthoDB" id="443318at2759"/>
<dbReference type="Proteomes" id="UP000000591">
    <property type="component" value="Chromosome VI"/>
</dbReference>
<dbReference type="GO" id="GO:0016020">
    <property type="term" value="C:membrane"/>
    <property type="evidence" value="ECO:0007669"/>
    <property type="project" value="UniProtKB-KW"/>
</dbReference>
<dbReference type="GO" id="GO:0005802">
    <property type="term" value="C:trans-Golgi network"/>
    <property type="evidence" value="ECO:0000318"/>
    <property type="project" value="GO_Central"/>
</dbReference>
<dbReference type="GO" id="GO:0004185">
    <property type="term" value="F:serine-type carboxypeptidase activity"/>
    <property type="evidence" value="ECO:0000318"/>
    <property type="project" value="GO_Central"/>
</dbReference>
<dbReference type="GO" id="GO:0006915">
    <property type="term" value="P:apoptotic process"/>
    <property type="evidence" value="ECO:0007669"/>
    <property type="project" value="UniProtKB-KW"/>
</dbReference>
<dbReference type="GO" id="GO:0006508">
    <property type="term" value="P:proteolysis"/>
    <property type="evidence" value="ECO:0007669"/>
    <property type="project" value="UniProtKB-KW"/>
</dbReference>
<dbReference type="Gene3D" id="3.40.50.1820">
    <property type="entry name" value="alpha/beta hydrolase"/>
    <property type="match status" value="1"/>
</dbReference>
<dbReference type="InterPro" id="IPR029058">
    <property type="entry name" value="AB_hydrolase_fold"/>
</dbReference>
<dbReference type="InterPro" id="IPR001563">
    <property type="entry name" value="Peptidase_S10"/>
</dbReference>
<dbReference type="InterPro" id="IPR033124">
    <property type="entry name" value="Ser_caboxypep_his_AS"/>
</dbReference>
<dbReference type="InterPro" id="IPR018202">
    <property type="entry name" value="Ser_caboxypep_ser_AS"/>
</dbReference>
<dbReference type="PANTHER" id="PTHR11802:SF190">
    <property type="entry name" value="PHEROMONE-PROCESSING CARBOXYPEPTIDASE KEX1"/>
    <property type="match status" value="1"/>
</dbReference>
<dbReference type="PANTHER" id="PTHR11802">
    <property type="entry name" value="SERINE PROTEASE FAMILY S10 SERINE CARBOXYPEPTIDASE"/>
    <property type="match status" value="1"/>
</dbReference>
<dbReference type="Pfam" id="PF00450">
    <property type="entry name" value="Peptidase_S10"/>
    <property type="match status" value="1"/>
</dbReference>
<dbReference type="PRINTS" id="PR00724">
    <property type="entry name" value="CRBOXYPTASEC"/>
</dbReference>
<dbReference type="SUPFAM" id="SSF53474">
    <property type="entry name" value="alpha/beta-Hydrolases"/>
    <property type="match status" value="1"/>
</dbReference>
<dbReference type="PROSITE" id="PS00560">
    <property type="entry name" value="CARBOXYPEPT_SER_HIS"/>
    <property type="match status" value="1"/>
</dbReference>
<dbReference type="PROSITE" id="PS00131">
    <property type="entry name" value="CARBOXYPEPT_SER_SER"/>
    <property type="match status" value="1"/>
</dbReference>
<accession>Q752M5</accession>
<keyword id="KW-0053">Apoptosis</keyword>
<keyword id="KW-0121">Carboxypeptidase</keyword>
<keyword id="KW-0325">Glycoprotein</keyword>
<keyword id="KW-0333">Golgi apparatus</keyword>
<keyword id="KW-0378">Hydrolase</keyword>
<keyword id="KW-0472">Membrane</keyword>
<keyword id="KW-0645">Protease</keyword>
<keyword id="KW-1185">Reference proteome</keyword>
<keyword id="KW-0732">Signal</keyword>
<keyword id="KW-0812">Transmembrane</keyword>
<keyword id="KW-1133">Transmembrane helix</keyword>